<dbReference type="EMBL" id="CP000942">
    <property type="protein sequence ID" value="ACA32743.1"/>
    <property type="molecule type" value="Genomic_DNA"/>
</dbReference>
<dbReference type="RefSeq" id="WP_004026203.1">
    <property type="nucleotide sequence ID" value="NC_010503.1"/>
</dbReference>
<dbReference type="SMR" id="B1AIM8"/>
<dbReference type="GeneID" id="93848714"/>
<dbReference type="KEGG" id="upa:UPA3_0247"/>
<dbReference type="HOGENOM" id="CLU_158491_2_0_14"/>
<dbReference type="Proteomes" id="UP000002162">
    <property type="component" value="Chromosome"/>
</dbReference>
<dbReference type="GO" id="GO:0022625">
    <property type="term" value="C:cytosolic large ribosomal subunit"/>
    <property type="evidence" value="ECO:0007669"/>
    <property type="project" value="TreeGrafter"/>
</dbReference>
<dbReference type="GO" id="GO:0003735">
    <property type="term" value="F:structural constituent of ribosome"/>
    <property type="evidence" value="ECO:0007669"/>
    <property type="project" value="InterPro"/>
</dbReference>
<dbReference type="GO" id="GO:0006412">
    <property type="term" value="P:translation"/>
    <property type="evidence" value="ECO:0007669"/>
    <property type="project" value="UniProtKB-UniRule"/>
</dbReference>
<dbReference type="CDD" id="cd00427">
    <property type="entry name" value="Ribosomal_L29_HIP"/>
    <property type="match status" value="1"/>
</dbReference>
<dbReference type="Gene3D" id="1.10.287.310">
    <property type="match status" value="1"/>
</dbReference>
<dbReference type="HAMAP" id="MF_00374">
    <property type="entry name" value="Ribosomal_uL29"/>
    <property type="match status" value="1"/>
</dbReference>
<dbReference type="InterPro" id="IPR050063">
    <property type="entry name" value="Ribosomal_protein_uL29"/>
</dbReference>
<dbReference type="InterPro" id="IPR001854">
    <property type="entry name" value="Ribosomal_uL29"/>
</dbReference>
<dbReference type="InterPro" id="IPR018254">
    <property type="entry name" value="Ribosomal_uL29_CS"/>
</dbReference>
<dbReference type="InterPro" id="IPR036049">
    <property type="entry name" value="Ribosomal_uL29_sf"/>
</dbReference>
<dbReference type="NCBIfam" id="TIGR00012">
    <property type="entry name" value="L29"/>
    <property type="match status" value="1"/>
</dbReference>
<dbReference type="PANTHER" id="PTHR10916">
    <property type="entry name" value="60S RIBOSOMAL PROTEIN L35/50S RIBOSOMAL PROTEIN L29"/>
    <property type="match status" value="1"/>
</dbReference>
<dbReference type="PANTHER" id="PTHR10916:SF0">
    <property type="entry name" value="LARGE RIBOSOMAL SUBUNIT PROTEIN UL29C"/>
    <property type="match status" value="1"/>
</dbReference>
<dbReference type="Pfam" id="PF00831">
    <property type="entry name" value="Ribosomal_L29"/>
    <property type="match status" value="1"/>
</dbReference>
<dbReference type="SUPFAM" id="SSF46561">
    <property type="entry name" value="Ribosomal protein L29 (L29p)"/>
    <property type="match status" value="1"/>
</dbReference>
<dbReference type="PROSITE" id="PS00579">
    <property type="entry name" value="RIBOSOMAL_L29"/>
    <property type="match status" value="1"/>
</dbReference>
<protein>
    <recommendedName>
        <fullName evidence="1">Large ribosomal subunit protein uL29</fullName>
    </recommendedName>
    <alternativeName>
        <fullName evidence="2">50S ribosomal protein L29</fullName>
    </alternativeName>
</protein>
<organism>
    <name type="scientific">Ureaplasma parvum serovar 3 (strain ATCC 27815 / 27 / NCTC 11736)</name>
    <dbReference type="NCBI Taxonomy" id="505682"/>
    <lineage>
        <taxon>Bacteria</taxon>
        <taxon>Bacillati</taxon>
        <taxon>Mycoplasmatota</taxon>
        <taxon>Mycoplasmoidales</taxon>
        <taxon>Mycoplasmoidaceae</taxon>
        <taxon>Ureaplasma</taxon>
    </lineage>
</organism>
<name>RL29_UREP2</name>
<gene>
    <name evidence="1" type="primary">rpmC</name>
    <name type="ordered locus">UPA3_0247</name>
</gene>
<evidence type="ECO:0000255" key="1">
    <source>
        <dbReference type="HAMAP-Rule" id="MF_00374"/>
    </source>
</evidence>
<evidence type="ECO:0000305" key="2"/>
<comment type="similarity">
    <text evidence="1">Belongs to the universal ribosomal protein uL29 family.</text>
</comment>
<sequence length="75" mass="8513">MSSIAQDLRKKDSLELEKIVIELKAKLLELRFAAANGEAEKLHTAKEIRKTIARALTILNERELAEKLNNKEANK</sequence>
<keyword id="KW-0687">Ribonucleoprotein</keyword>
<keyword id="KW-0689">Ribosomal protein</keyword>
<feature type="chain" id="PRO_1000079913" description="Large ribosomal subunit protein uL29">
    <location>
        <begin position="1"/>
        <end position="75"/>
    </location>
</feature>
<accession>B1AIM8</accession>
<reference key="1">
    <citation type="submission" date="2008-02" db="EMBL/GenBank/DDBJ databases">
        <title>Genome sequence of Ureaplasma parvum serovar 3.</title>
        <authorList>
            <person name="Methe B.A."/>
            <person name="Glass J."/>
            <person name="Waites K."/>
            <person name="Shrivastava S."/>
        </authorList>
    </citation>
    <scope>NUCLEOTIDE SEQUENCE [LARGE SCALE GENOMIC DNA]</scope>
    <source>
        <strain>ATCC 27815 / 27 / NCTC 11736</strain>
    </source>
</reference>
<proteinExistence type="inferred from homology"/>